<gene>
    <name type="primary">rps4</name>
</gene>
<proteinExistence type="inferred from homology"/>
<dbReference type="EMBL" id="DQ291132">
    <property type="protein sequence ID" value="ABB81943.1"/>
    <property type="molecule type" value="Genomic_DNA"/>
</dbReference>
<dbReference type="RefSeq" id="YP_635875.1">
    <property type="nucleotide sequence ID" value="NC_008099.1"/>
</dbReference>
<dbReference type="SMR" id="Q20EX0"/>
<dbReference type="GeneID" id="4100135"/>
<dbReference type="GO" id="GO:0009507">
    <property type="term" value="C:chloroplast"/>
    <property type="evidence" value="ECO:0007669"/>
    <property type="project" value="UniProtKB-SubCell"/>
</dbReference>
<dbReference type="GO" id="GO:0015935">
    <property type="term" value="C:small ribosomal subunit"/>
    <property type="evidence" value="ECO:0007669"/>
    <property type="project" value="InterPro"/>
</dbReference>
<dbReference type="GO" id="GO:0019843">
    <property type="term" value="F:rRNA binding"/>
    <property type="evidence" value="ECO:0007669"/>
    <property type="project" value="UniProtKB-UniRule"/>
</dbReference>
<dbReference type="GO" id="GO:0003735">
    <property type="term" value="F:structural constituent of ribosome"/>
    <property type="evidence" value="ECO:0007669"/>
    <property type="project" value="InterPro"/>
</dbReference>
<dbReference type="GO" id="GO:0042274">
    <property type="term" value="P:ribosomal small subunit biogenesis"/>
    <property type="evidence" value="ECO:0007669"/>
    <property type="project" value="TreeGrafter"/>
</dbReference>
<dbReference type="GO" id="GO:0006412">
    <property type="term" value="P:translation"/>
    <property type="evidence" value="ECO:0007669"/>
    <property type="project" value="UniProtKB-UniRule"/>
</dbReference>
<dbReference type="CDD" id="cd00165">
    <property type="entry name" value="S4"/>
    <property type="match status" value="1"/>
</dbReference>
<dbReference type="FunFam" id="3.10.290.10:FF:000001">
    <property type="entry name" value="30S ribosomal protein S4"/>
    <property type="match status" value="1"/>
</dbReference>
<dbReference type="FunFam" id="1.10.1050.10:FF:000002">
    <property type="entry name" value="30S ribosomal protein S4, chloroplastic"/>
    <property type="match status" value="1"/>
</dbReference>
<dbReference type="Gene3D" id="1.10.1050.10">
    <property type="entry name" value="Ribosomal Protein S4 Delta 41, Chain A, domain 1"/>
    <property type="match status" value="1"/>
</dbReference>
<dbReference type="Gene3D" id="3.10.290.10">
    <property type="entry name" value="RNA-binding S4 domain"/>
    <property type="match status" value="1"/>
</dbReference>
<dbReference type="HAMAP" id="MF_01306_B">
    <property type="entry name" value="Ribosomal_uS4_B"/>
    <property type="match status" value="1"/>
</dbReference>
<dbReference type="InterPro" id="IPR022801">
    <property type="entry name" value="Ribosomal_uS4"/>
</dbReference>
<dbReference type="InterPro" id="IPR005709">
    <property type="entry name" value="Ribosomal_uS4_bac-type"/>
</dbReference>
<dbReference type="InterPro" id="IPR018079">
    <property type="entry name" value="Ribosomal_uS4_CS"/>
</dbReference>
<dbReference type="InterPro" id="IPR001912">
    <property type="entry name" value="Ribosomal_uS4_N"/>
</dbReference>
<dbReference type="InterPro" id="IPR002942">
    <property type="entry name" value="S4_RNA-bd"/>
</dbReference>
<dbReference type="InterPro" id="IPR036986">
    <property type="entry name" value="S4_RNA-bd_sf"/>
</dbReference>
<dbReference type="NCBIfam" id="NF003717">
    <property type="entry name" value="PRK05327.1"/>
    <property type="match status" value="1"/>
</dbReference>
<dbReference type="NCBIfam" id="TIGR01017">
    <property type="entry name" value="rpsD_bact"/>
    <property type="match status" value="1"/>
</dbReference>
<dbReference type="PANTHER" id="PTHR11831">
    <property type="entry name" value="30S 40S RIBOSOMAL PROTEIN"/>
    <property type="match status" value="1"/>
</dbReference>
<dbReference type="PANTHER" id="PTHR11831:SF4">
    <property type="entry name" value="SMALL RIBOSOMAL SUBUNIT PROTEIN US4M"/>
    <property type="match status" value="1"/>
</dbReference>
<dbReference type="Pfam" id="PF00163">
    <property type="entry name" value="Ribosomal_S4"/>
    <property type="match status" value="1"/>
</dbReference>
<dbReference type="Pfam" id="PF01479">
    <property type="entry name" value="S4"/>
    <property type="match status" value="1"/>
</dbReference>
<dbReference type="SMART" id="SM01390">
    <property type="entry name" value="Ribosomal_S4"/>
    <property type="match status" value="1"/>
</dbReference>
<dbReference type="SMART" id="SM00363">
    <property type="entry name" value="S4"/>
    <property type="match status" value="1"/>
</dbReference>
<dbReference type="SUPFAM" id="SSF55174">
    <property type="entry name" value="Alpha-L RNA-binding motif"/>
    <property type="match status" value="1"/>
</dbReference>
<dbReference type="PROSITE" id="PS00632">
    <property type="entry name" value="RIBOSOMAL_S4"/>
    <property type="match status" value="1"/>
</dbReference>
<dbReference type="PROSITE" id="PS50889">
    <property type="entry name" value="S4"/>
    <property type="match status" value="1"/>
</dbReference>
<evidence type="ECO:0000250" key="1"/>
<evidence type="ECO:0000305" key="2"/>
<sequence>MSRYRGPRLRIIRRLGELPGFTSKTTTRTSSPGQHGGSNFAKSSAYGIRLQEKQKLRFNYGITERQLLSYVKKAKRMKGSTGEVLLQLLEMRLDNVVFRLGMAPTVVAARQLISHGHIVVNDQKVTIPSYACQVKDVISVRAKNNSRKMVTEANSTATANVPSHLSWNKESLVGVVNKVIDRKDVGLQLNELLVVEYYSR</sequence>
<feature type="chain" id="PRO_0000277015" description="Small ribosomal subunit protein uS4c">
    <location>
        <begin position="1"/>
        <end position="200"/>
    </location>
</feature>
<feature type="domain" description="S4 RNA-binding">
    <location>
        <begin position="91"/>
        <end position="154"/>
    </location>
</feature>
<reference key="1">
    <citation type="journal article" date="2006" name="BMC Biol.">
        <title>The complete chloroplast DNA sequence of the green alga Oltmannsiellopsis viridis reveals a distinctive quadripartite architecture in the chloroplast genome of early diverging ulvophytes.</title>
        <authorList>
            <person name="Pombert J.-F."/>
            <person name="Lemieux C."/>
            <person name="Turmel M."/>
        </authorList>
    </citation>
    <scope>NUCLEOTIDE SEQUENCE [LARGE SCALE GENOMIC DNA]</scope>
</reference>
<accession>Q20EX0</accession>
<name>RR4_OLTVI</name>
<keyword id="KW-0150">Chloroplast</keyword>
<keyword id="KW-0934">Plastid</keyword>
<keyword id="KW-0687">Ribonucleoprotein</keyword>
<keyword id="KW-0689">Ribosomal protein</keyword>
<keyword id="KW-0694">RNA-binding</keyword>
<keyword id="KW-0699">rRNA-binding</keyword>
<geneLocation type="chloroplast"/>
<organism>
    <name type="scientific">Oltmannsiellopsis viridis</name>
    <name type="common">Marine flagellate</name>
    <name type="synonym">Oltmannsiella viridis</name>
    <dbReference type="NCBI Taxonomy" id="51324"/>
    <lineage>
        <taxon>Eukaryota</taxon>
        <taxon>Viridiplantae</taxon>
        <taxon>Chlorophyta</taxon>
        <taxon>Ulvophyceae</taxon>
        <taxon>Oltmannsiellopsidales</taxon>
        <taxon>Oltmannsiellopsidaceae</taxon>
        <taxon>Oltmannsiellopsis</taxon>
    </lineage>
</organism>
<comment type="function">
    <text evidence="1">One of the primary rRNA binding proteins, it binds directly to 16S rRNA where it nucleates assembly of the body of the 30S subunit.</text>
</comment>
<comment type="function">
    <text evidence="1">With S5 and S12 plays an important role in translational accuracy.</text>
</comment>
<comment type="subunit">
    <text evidence="1">Part of the 30S ribosomal subunit. Contacts protein S5. The interaction surface between S4 and S5 is involved in control of translational fidelity (By similarity).</text>
</comment>
<comment type="subcellular location">
    <subcellularLocation>
        <location>Plastid</location>
        <location>Chloroplast</location>
    </subcellularLocation>
</comment>
<comment type="similarity">
    <text evidence="2">Belongs to the universal ribosomal protein uS4 family.</text>
</comment>
<protein>
    <recommendedName>
        <fullName evidence="2">Small ribosomal subunit protein uS4c</fullName>
    </recommendedName>
    <alternativeName>
        <fullName>30S ribosomal protein S4, chloroplastic</fullName>
    </alternativeName>
</protein>